<keyword id="KW-0233">DNA recombination</keyword>
<keyword id="KW-0238">DNA-binding</keyword>
<keyword id="KW-0804">Transcription</keyword>
<keyword id="KW-0805">Transcription regulation</keyword>
<keyword id="KW-0810">Translation regulation</keyword>
<gene>
    <name evidence="1" type="primary">ihfB</name>
    <name evidence="1" type="synonym">himD</name>
    <name type="ordered locus">APJL_0741</name>
</gene>
<organism>
    <name type="scientific">Actinobacillus pleuropneumoniae serotype 3 (strain JL03)</name>
    <dbReference type="NCBI Taxonomy" id="434271"/>
    <lineage>
        <taxon>Bacteria</taxon>
        <taxon>Pseudomonadati</taxon>
        <taxon>Pseudomonadota</taxon>
        <taxon>Gammaproteobacteria</taxon>
        <taxon>Pasteurellales</taxon>
        <taxon>Pasteurellaceae</taxon>
        <taxon>Actinobacillus</taxon>
    </lineage>
</organism>
<dbReference type="EMBL" id="CP000687">
    <property type="protein sequence ID" value="ABY69304.1"/>
    <property type="molecule type" value="Genomic_DNA"/>
</dbReference>
<dbReference type="RefSeq" id="WP_005597138.1">
    <property type="nucleotide sequence ID" value="NC_010278.1"/>
</dbReference>
<dbReference type="SMR" id="B0BP19"/>
<dbReference type="KEGG" id="apj:APJL_0741"/>
<dbReference type="HOGENOM" id="CLU_105066_2_0_6"/>
<dbReference type="Proteomes" id="UP000008547">
    <property type="component" value="Chromosome"/>
</dbReference>
<dbReference type="GO" id="GO:0005694">
    <property type="term" value="C:chromosome"/>
    <property type="evidence" value="ECO:0007669"/>
    <property type="project" value="InterPro"/>
</dbReference>
<dbReference type="GO" id="GO:0005829">
    <property type="term" value="C:cytosol"/>
    <property type="evidence" value="ECO:0007669"/>
    <property type="project" value="TreeGrafter"/>
</dbReference>
<dbReference type="GO" id="GO:0003677">
    <property type="term" value="F:DNA binding"/>
    <property type="evidence" value="ECO:0007669"/>
    <property type="project" value="UniProtKB-UniRule"/>
</dbReference>
<dbReference type="GO" id="GO:0030527">
    <property type="term" value="F:structural constituent of chromatin"/>
    <property type="evidence" value="ECO:0007669"/>
    <property type="project" value="InterPro"/>
</dbReference>
<dbReference type="GO" id="GO:0006310">
    <property type="term" value="P:DNA recombination"/>
    <property type="evidence" value="ECO:0007669"/>
    <property type="project" value="UniProtKB-UniRule"/>
</dbReference>
<dbReference type="GO" id="GO:0006355">
    <property type="term" value="P:regulation of DNA-templated transcription"/>
    <property type="evidence" value="ECO:0007669"/>
    <property type="project" value="UniProtKB-UniRule"/>
</dbReference>
<dbReference type="GO" id="GO:0006417">
    <property type="term" value="P:regulation of translation"/>
    <property type="evidence" value="ECO:0007669"/>
    <property type="project" value="UniProtKB-UniRule"/>
</dbReference>
<dbReference type="CDD" id="cd13836">
    <property type="entry name" value="IHF_B"/>
    <property type="match status" value="1"/>
</dbReference>
<dbReference type="Gene3D" id="4.10.520.10">
    <property type="entry name" value="IHF-like DNA-binding proteins"/>
    <property type="match status" value="1"/>
</dbReference>
<dbReference type="HAMAP" id="MF_00381">
    <property type="entry name" value="IHF_beta"/>
    <property type="match status" value="1"/>
</dbReference>
<dbReference type="InterPro" id="IPR000119">
    <property type="entry name" value="Hist_DNA-bd"/>
</dbReference>
<dbReference type="InterPro" id="IPR020816">
    <property type="entry name" value="Histone-like_DNA-bd_CS"/>
</dbReference>
<dbReference type="InterPro" id="IPR010992">
    <property type="entry name" value="IHF-like_DNA-bd_dom_sf"/>
</dbReference>
<dbReference type="InterPro" id="IPR005685">
    <property type="entry name" value="IHF_beta"/>
</dbReference>
<dbReference type="NCBIfam" id="TIGR00988">
    <property type="entry name" value="hip"/>
    <property type="match status" value="1"/>
</dbReference>
<dbReference type="NCBIfam" id="NF001222">
    <property type="entry name" value="PRK00199.1"/>
    <property type="match status" value="1"/>
</dbReference>
<dbReference type="PANTHER" id="PTHR33175">
    <property type="entry name" value="DNA-BINDING PROTEIN HU"/>
    <property type="match status" value="1"/>
</dbReference>
<dbReference type="PANTHER" id="PTHR33175:SF5">
    <property type="entry name" value="INTEGRATION HOST FACTOR SUBUNIT BETA"/>
    <property type="match status" value="1"/>
</dbReference>
<dbReference type="Pfam" id="PF00216">
    <property type="entry name" value="Bac_DNA_binding"/>
    <property type="match status" value="1"/>
</dbReference>
<dbReference type="PRINTS" id="PR01727">
    <property type="entry name" value="DNABINDINGHU"/>
</dbReference>
<dbReference type="SMART" id="SM00411">
    <property type="entry name" value="BHL"/>
    <property type="match status" value="1"/>
</dbReference>
<dbReference type="SUPFAM" id="SSF47729">
    <property type="entry name" value="IHF-like DNA-binding proteins"/>
    <property type="match status" value="1"/>
</dbReference>
<dbReference type="PROSITE" id="PS00045">
    <property type="entry name" value="HISTONE_LIKE"/>
    <property type="match status" value="1"/>
</dbReference>
<reference key="1">
    <citation type="journal article" date="2008" name="PLoS ONE">
        <title>Genome biology of Actinobacillus pleuropneumoniae JL03, an isolate of serotype 3 prevalent in China.</title>
        <authorList>
            <person name="Xu Z."/>
            <person name="Zhou Y."/>
            <person name="Li L."/>
            <person name="Zhou R."/>
            <person name="Xiao S."/>
            <person name="Wan Y."/>
            <person name="Zhang S."/>
            <person name="Wang K."/>
            <person name="Li W."/>
            <person name="Li L."/>
            <person name="Jin H."/>
            <person name="Kang M."/>
            <person name="Dalai B."/>
            <person name="Li T."/>
            <person name="Liu L."/>
            <person name="Cheng Y."/>
            <person name="Zhang L."/>
            <person name="Xu T."/>
            <person name="Zheng H."/>
            <person name="Pu S."/>
            <person name="Wang B."/>
            <person name="Gu W."/>
            <person name="Zhang X.L."/>
            <person name="Zhu G.-F."/>
            <person name="Wang S."/>
            <person name="Zhao G.-P."/>
            <person name="Chen H."/>
        </authorList>
    </citation>
    <scope>NUCLEOTIDE SEQUENCE [LARGE SCALE GENOMIC DNA]</scope>
    <source>
        <strain>JL03</strain>
    </source>
</reference>
<name>IHFB_ACTPJ</name>
<protein>
    <recommendedName>
        <fullName evidence="1">Integration host factor subunit beta</fullName>
        <shortName evidence="1">IHF-beta</shortName>
    </recommendedName>
</protein>
<comment type="function">
    <text evidence="1">This protein is one of the two subunits of integration host factor, a specific DNA-binding protein that functions in genetic recombination as well as in transcriptional and translational control.</text>
</comment>
<comment type="subunit">
    <text evidence="1">Heterodimer of an alpha and a beta chain.</text>
</comment>
<comment type="similarity">
    <text evidence="1">Belongs to the bacterial histone-like protein family.</text>
</comment>
<evidence type="ECO:0000255" key="1">
    <source>
        <dbReference type="HAMAP-Rule" id="MF_00381"/>
    </source>
</evidence>
<proteinExistence type="inferred from homology"/>
<accession>B0BP19</accession>
<feature type="chain" id="PRO_1000122181" description="Integration host factor subunit beta">
    <location>
        <begin position="1"/>
        <end position="93"/>
    </location>
</feature>
<sequence length="93" mass="10595">MTKSELIENLVSLNPALQVKSVEDGVKEILEQIMLFLERGERVEVRGFGSFSLHYRQPRVGRNPKTGESVKLDAKYVPHFKAGKDLKERVDLV</sequence>